<evidence type="ECO:0000250" key="1">
    <source>
        <dbReference type="UniProtKB" id="P0AFI7"/>
    </source>
</evidence>
<evidence type="ECO:0000250" key="2">
    <source>
        <dbReference type="UniProtKB" id="Q9NVS9"/>
    </source>
</evidence>
<evidence type="ECO:0000305" key="3"/>
<dbReference type="EC" id="1.4.3.5" evidence="2"/>
<dbReference type="EMBL" id="AAFI02000023">
    <property type="protein sequence ID" value="EAL68226.1"/>
    <property type="molecule type" value="Genomic_DNA"/>
</dbReference>
<dbReference type="RefSeq" id="XP_642126.1">
    <property type="nucleotide sequence ID" value="XM_637034.1"/>
</dbReference>
<dbReference type="SMR" id="Q54YS6"/>
<dbReference type="FunCoup" id="Q54YS6">
    <property type="interactions" value="123"/>
</dbReference>
<dbReference type="STRING" id="44689.Q54YS6"/>
<dbReference type="PaxDb" id="44689-DDB0231657"/>
<dbReference type="EnsemblProtists" id="EAL68226">
    <property type="protein sequence ID" value="EAL68226"/>
    <property type="gene ID" value="DDB_G0278107"/>
</dbReference>
<dbReference type="GeneID" id="8621335"/>
<dbReference type="KEGG" id="ddi:DDB_G0278107"/>
<dbReference type="dictyBase" id="DDB_G0278107"/>
<dbReference type="VEuPathDB" id="AmoebaDB:DDB_G0278107"/>
<dbReference type="eggNOG" id="KOG2586">
    <property type="taxonomic scope" value="Eukaryota"/>
</dbReference>
<dbReference type="HOGENOM" id="CLU_032263_2_3_1"/>
<dbReference type="InParanoid" id="Q54YS6"/>
<dbReference type="OMA" id="AYFRTRP"/>
<dbReference type="PhylomeDB" id="Q54YS6"/>
<dbReference type="Reactome" id="R-DDI-964975">
    <property type="pathway name" value="Vitamin B6 activation to pyridoxal phosphate"/>
</dbReference>
<dbReference type="UniPathway" id="UPA01068">
    <property type="reaction ID" value="UER00304"/>
</dbReference>
<dbReference type="UniPathway" id="UPA01068">
    <property type="reaction ID" value="UER00305"/>
</dbReference>
<dbReference type="PRO" id="PR:Q54YS6"/>
<dbReference type="Proteomes" id="UP000002195">
    <property type="component" value="Chromosome 3"/>
</dbReference>
<dbReference type="GO" id="GO:0010181">
    <property type="term" value="F:FMN binding"/>
    <property type="evidence" value="ECO:0007669"/>
    <property type="project" value="InterPro"/>
</dbReference>
<dbReference type="GO" id="GO:0004733">
    <property type="term" value="F:pyridoxamine phosphate oxidase activity"/>
    <property type="evidence" value="ECO:0000250"/>
    <property type="project" value="dictyBase"/>
</dbReference>
<dbReference type="GO" id="GO:0008615">
    <property type="term" value="P:pyridoxine biosynthetic process"/>
    <property type="evidence" value="ECO:0007669"/>
    <property type="project" value="UniProtKB-KW"/>
</dbReference>
<dbReference type="FunFam" id="2.30.110.10:FF:000020">
    <property type="entry name" value="PNPO isoform 11"/>
    <property type="match status" value="1"/>
</dbReference>
<dbReference type="Gene3D" id="2.30.110.10">
    <property type="entry name" value="Electron Transport, Fmn-binding Protein, Chain A"/>
    <property type="match status" value="1"/>
</dbReference>
<dbReference type="HAMAP" id="MF_01629">
    <property type="entry name" value="PdxH"/>
    <property type="match status" value="1"/>
</dbReference>
<dbReference type="InterPro" id="IPR000659">
    <property type="entry name" value="Pyridox_Oxase"/>
</dbReference>
<dbReference type="InterPro" id="IPR019740">
    <property type="entry name" value="Pyridox_Oxase_CS"/>
</dbReference>
<dbReference type="InterPro" id="IPR011576">
    <property type="entry name" value="Pyridox_Oxase_N"/>
</dbReference>
<dbReference type="InterPro" id="IPR019576">
    <property type="entry name" value="Pyridoxamine_oxidase_dimer_C"/>
</dbReference>
<dbReference type="InterPro" id="IPR012349">
    <property type="entry name" value="Split_barrel_FMN-bd"/>
</dbReference>
<dbReference type="NCBIfam" id="TIGR00558">
    <property type="entry name" value="pdxH"/>
    <property type="match status" value="1"/>
</dbReference>
<dbReference type="NCBIfam" id="NF004231">
    <property type="entry name" value="PRK05679.1"/>
    <property type="match status" value="1"/>
</dbReference>
<dbReference type="PANTHER" id="PTHR10851:SF0">
    <property type="entry name" value="PYRIDOXINE-5'-PHOSPHATE OXIDASE"/>
    <property type="match status" value="1"/>
</dbReference>
<dbReference type="PANTHER" id="PTHR10851">
    <property type="entry name" value="PYRIDOXINE-5-PHOSPHATE OXIDASE"/>
    <property type="match status" value="1"/>
</dbReference>
<dbReference type="Pfam" id="PF10590">
    <property type="entry name" value="PNP_phzG_C"/>
    <property type="match status" value="1"/>
</dbReference>
<dbReference type="Pfam" id="PF01243">
    <property type="entry name" value="PNPOx_N"/>
    <property type="match status" value="1"/>
</dbReference>
<dbReference type="PIRSF" id="PIRSF000190">
    <property type="entry name" value="Pyd_amn-ph_oxd"/>
    <property type="match status" value="1"/>
</dbReference>
<dbReference type="SUPFAM" id="SSF50475">
    <property type="entry name" value="FMN-binding split barrel"/>
    <property type="match status" value="1"/>
</dbReference>
<dbReference type="PROSITE" id="PS01064">
    <property type="entry name" value="PYRIDOX_OXIDASE"/>
    <property type="match status" value="1"/>
</dbReference>
<keyword id="KW-0285">Flavoprotein</keyword>
<keyword id="KW-0288">FMN</keyword>
<keyword id="KW-0560">Oxidoreductase</keyword>
<keyword id="KW-0597">Phosphoprotein</keyword>
<keyword id="KW-0663">Pyridoxal phosphate</keyword>
<keyword id="KW-0664">Pyridoxine biosynthesis</keyword>
<keyword id="KW-1185">Reference proteome</keyword>
<feature type="chain" id="PRO_0000331120" description="Pyridoxine-5'-phosphate oxidase">
    <location>
        <begin position="1"/>
        <end position="227"/>
    </location>
</feature>
<feature type="binding site" evidence="1">
    <location>
        <begin position="20"/>
        <end position="23"/>
    </location>
    <ligand>
        <name>pyridoxal 5'-phosphate</name>
        <dbReference type="ChEBI" id="CHEBI:597326"/>
    </ligand>
</feature>
<feature type="binding site" evidence="2">
    <location>
        <begin position="75"/>
        <end position="78"/>
    </location>
    <ligand>
        <name>FMN</name>
        <dbReference type="ChEBI" id="CHEBI:58210"/>
    </ligand>
</feature>
<feature type="binding site" evidence="2">
    <location>
        <position position="80"/>
    </location>
    <ligand>
        <name>pyridoxal 5'-phosphate</name>
        <dbReference type="ChEBI" id="CHEBI:597326"/>
    </ligand>
</feature>
<feature type="binding site" evidence="2">
    <location>
        <begin position="90"/>
        <end position="91"/>
    </location>
    <ligand>
        <name>FMN</name>
        <dbReference type="ChEBI" id="CHEBI:58210"/>
    </ligand>
</feature>
<feature type="binding site" evidence="2">
    <location>
        <begin position="96"/>
        <end position="97"/>
    </location>
    <ligand>
        <name>FMN</name>
        <dbReference type="ChEBI" id="CHEBI:58210"/>
    </ligand>
</feature>
<feature type="binding site" evidence="1">
    <location>
        <position position="117"/>
    </location>
    <ligand>
        <name>FMN</name>
        <dbReference type="ChEBI" id="CHEBI:58210"/>
    </ligand>
</feature>
<feature type="binding site" evidence="2">
    <location>
        <position position="135"/>
    </location>
    <ligand>
        <name>pyridoxal 5'-phosphate</name>
        <dbReference type="ChEBI" id="CHEBI:597326"/>
    </ligand>
</feature>
<feature type="binding site" evidence="2">
    <location>
        <position position="139"/>
    </location>
    <ligand>
        <name>pyridoxal 5'-phosphate</name>
        <dbReference type="ChEBI" id="CHEBI:597326"/>
    </ligand>
</feature>
<feature type="binding site" evidence="2">
    <location>
        <position position="143"/>
    </location>
    <ligand>
        <name>pyridoxal 5'-phosphate</name>
        <dbReference type="ChEBI" id="CHEBI:597326"/>
    </ligand>
</feature>
<feature type="binding site" evidence="2">
    <location>
        <begin position="152"/>
        <end position="153"/>
    </location>
    <ligand>
        <name>FMN</name>
        <dbReference type="ChEBI" id="CHEBI:58210"/>
    </ligand>
</feature>
<feature type="binding site" evidence="1">
    <location>
        <position position="197"/>
    </location>
    <ligand>
        <name>FMN</name>
        <dbReference type="ChEBI" id="CHEBI:58210"/>
    </ligand>
</feature>
<feature type="binding site" evidence="1">
    <location>
        <begin position="203"/>
        <end position="205"/>
    </location>
    <ligand>
        <name>pyridoxal 5'-phosphate</name>
        <dbReference type="ChEBI" id="CHEBI:597326"/>
    </ligand>
</feature>
<feature type="binding site" evidence="1">
    <location>
        <position position="207"/>
    </location>
    <ligand>
        <name>FMN</name>
        <dbReference type="ChEBI" id="CHEBI:58210"/>
    </ligand>
</feature>
<protein>
    <recommendedName>
        <fullName>Pyridoxine-5'-phosphate oxidase</fullName>
        <ecNumber evidence="2">1.4.3.5</ecNumber>
    </recommendedName>
    <alternativeName>
        <fullName>Pyridoxamine-phosphate oxidase</fullName>
    </alternativeName>
</protein>
<comment type="function">
    <text evidence="2">Catalyzes the oxidation of either pyridoxine 5'-phosphate (PNP) or pyridoxamine 5'-phosphate (PMP) into pyridoxal 5'-phosphate (PLP).</text>
</comment>
<comment type="catalytic activity">
    <reaction evidence="2">
        <text>pyridoxamine 5'-phosphate + O2 + H2O = pyridoxal 5'-phosphate + H2O2 + NH4(+)</text>
        <dbReference type="Rhea" id="RHEA:15817"/>
        <dbReference type="ChEBI" id="CHEBI:15377"/>
        <dbReference type="ChEBI" id="CHEBI:15379"/>
        <dbReference type="ChEBI" id="CHEBI:16240"/>
        <dbReference type="ChEBI" id="CHEBI:28938"/>
        <dbReference type="ChEBI" id="CHEBI:58451"/>
        <dbReference type="ChEBI" id="CHEBI:597326"/>
        <dbReference type="EC" id="1.4.3.5"/>
    </reaction>
    <physiologicalReaction direction="left-to-right" evidence="2">
        <dbReference type="Rhea" id="RHEA:15818"/>
    </physiologicalReaction>
</comment>
<comment type="catalytic activity">
    <reaction evidence="2">
        <text>pyridoxine 5'-phosphate + O2 = pyridoxal 5'-phosphate + H2O2</text>
        <dbReference type="Rhea" id="RHEA:15149"/>
        <dbReference type="ChEBI" id="CHEBI:15379"/>
        <dbReference type="ChEBI" id="CHEBI:16240"/>
        <dbReference type="ChEBI" id="CHEBI:58589"/>
        <dbReference type="ChEBI" id="CHEBI:597326"/>
        <dbReference type="EC" id="1.4.3.5"/>
    </reaction>
    <physiologicalReaction direction="left-to-right" evidence="2">
        <dbReference type="Rhea" id="RHEA:15150"/>
    </physiologicalReaction>
</comment>
<comment type="cofactor">
    <cofactor evidence="2">
        <name>FMN</name>
        <dbReference type="ChEBI" id="CHEBI:58210"/>
    </cofactor>
    <text evidence="2">Binds 1 FMN per subunit.</text>
</comment>
<comment type="pathway">
    <text evidence="2">Cofactor metabolism; pyridoxal 5'-phosphate salvage; pyridoxal 5'-phosphate from pyridoxamine 5'-phosphate: step 1/1.</text>
</comment>
<comment type="pathway">
    <text evidence="2">Cofactor metabolism; pyridoxal 5'-phosphate salvage; pyridoxal 5'-phosphate from pyridoxine 5'-phosphate: step 1/1.</text>
</comment>
<comment type="subunit">
    <text evidence="2">Homodimer.</text>
</comment>
<comment type="similarity">
    <text evidence="3">Belongs to the pyridoxamine 5'-phosphate oxidase family.</text>
</comment>
<organism>
    <name type="scientific">Dictyostelium discoideum</name>
    <name type="common">Social amoeba</name>
    <dbReference type="NCBI Taxonomy" id="44689"/>
    <lineage>
        <taxon>Eukaryota</taxon>
        <taxon>Amoebozoa</taxon>
        <taxon>Evosea</taxon>
        <taxon>Eumycetozoa</taxon>
        <taxon>Dictyostelia</taxon>
        <taxon>Dictyosteliales</taxon>
        <taxon>Dictyosteliaceae</taxon>
        <taxon>Dictyostelium</taxon>
    </lineage>
</organism>
<proteinExistence type="inferred from homology"/>
<sequence length="227" mass="26850">MSINLDNEELKNEDLVANMRKDYRMGELKEEGLLESPFKMFDMWLTQEIELKNEGAEPNAFTLATCSIERKPSARVVLLKHFDHQGFVFYTNYNSRKSKELSENPFASMTFLWTQKQVRIEGSVEKVDRLESEKYFKSRPRSSQIGAWVSEFQSSEVTKQHLEEKTIEMENKFKDQEVPLPPFWGGWRIKPYAFEFWQGKSGRIHDRFKYVPTDSNNDNWITKRLSP</sequence>
<name>PNPO_DICDI</name>
<gene>
    <name type="primary">pnpo</name>
    <name type="ORF">DDB_G0278107</name>
</gene>
<reference key="1">
    <citation type="journal article" date="2005" name="Nature">
        <title>The genome of the social amoeba Dictyostelium discoideum.</title>
        <authorList>
            <person name="Eichinger L."/>
            <person name="Pachebat J.A."/>
            <person name="Gloeckner G."/>
            <person name="Rajandream M.A."/>
            <person name="Sucgang R."/>
            <person name="Berriman M."/>
            <person name="Song J."/>
            <person name="Olsen R."/>
            <person name="Szafranski K."/>
            <person name="Xu Q."/>
            <person name="Tunggal B."/>
            <person name="Kummerfeld S."/>
            <person name="Madera M."/>
            <person name="Konfortov B.A."/>
            <person name="Rivero F."/>
            <person name="Bankier A.T."/>
            <person name="Lehmann R."/>
            <person name="Hamlin N."/>
            <person name="Davies R."/>
            <person name="Gaudet P."/>
            <person name="Fey P."/>
            <person name="Pilcher K."/>
            <person name="Chen G."/>
            <person name="Saunders D."/>
            <person name="Sodergren E.J."/>
            <person name="Davis P."/>
            <person name="Kerhornou A."/>
            <person name="Nie X."/>
            <person name="Hall N."/>
            <person name="Anjard C."/>
            <person name="Hemphill L."/>
            <person name="Bason N."/>
            <person name="Farbrother P."/>
            <person name="Desany B."/>
            <person name="Just E."/>
            <person name="Morio T."/>
            <person name="Rost R."/>
            <person name="Churcher C.M."/>
            <person name="Cooper J."/>
            <person name="Haydock S."/>
            <person name="van Driessche N."/>
            <person name="Cronin A."/>
            <person name="Goodhead I."/>
            <person name="Muzny D.M."/>
            <person name="Mourier T."/>
            <person name="Pain A."/>
            <person name="Lu M."/>
            <person name="Harper D."/>
            <person name="Lindsay R."/>
            <person name="Hauser H."/>
            <person name="James K.D."/>
            <person name="Quiles M."/>
            <person name="Madan Babu M."/>
            <person name="Saito T."/>
            <person name="Buchrieser C."/>
            <person name="Wardroper A."/>
            <person name="Felder M."/>
            <person name="Thangavelu M."/>
            <person name="Johnson D."/>
            <person name="Knights A."/>
            <person name="Loulseged H."/>
            <person name="Mungall K.L."/>
            <person name="Oliver K."/>
            <person name="Price C."/>
            <person name="Quail M.A."/>
            <person name="Urushihara H."/>
            <person name="Hernandez J."/>
            <person name="Rabbinowitsch E."/>
            <person name="Steffen D."/>
            <person name="Sanders M."/>
            <person name="Ma J."/>
            <person name="Kohara Y."/>
            <person name="Sharp S."/>
            <person name="Simmonds M.N."/>
            <person name="Spiegler S."/>
            <person name="Tivey A."/>
            <person name="Sugano S."/>
            <person name="White B."/>
            <person name="Walker D."/>
            <person name="Woodward J.R."/>
            <person name="Winckler T."/>
            <person name="Tanaka Y."/>
            <person name="Shaulsky G."/>
            <person name="Schleicher M."/>
            <person name="Weinstock G.M."/>
            <person name="Rosenthal A."/>
            <person name="Cox E.C."/>
            <person name="Chisholm R.L."/>
            <person name="Gibbs R.A."/>
            <person name="Loomis W.F."/>
            <person name="Platzer M."/>
            <person name="Kay R.R."/>
            <person name="Williams J.G."/>
            <person name="Dear P.H."/>
            <person name="Noegel A.A."/>
            <person name="Barrell B.G."/>
            <person name="Kuspa A."/>
        </authorList>
    </citation>
    <scope>NUCLEOTIDE SEQUENCE [LARGE SCALE GENOMIC DNA]</scope>
    <source>
        <strain>AX4</strain>
    </source>
</reference>
<accession>Q54YS6</accession>